<keyword id="KW-0053">Apoptosis</keyword>
<keyword id="KW-0121">Carboxypeptidase</keyword>
<keyword id="KW-0325">Glycoprotein</keyword>
<keyword id="KW-0333">Golgi apparatus</keyword>
<keyword id="KW-0378">Hydrolase</keyword>
<keyword id="KW-0472">Membrane</keyword>
<keyword id="KW-0645">Protease</keyword>
<keyword id="KW-1185">Reference proteome</keyword>
<keyword id="KW-0732">Signal</keyword>
<keyword id="KW-0812">Transmembrane</keyword>
<keyword id="KW-1133">Transmembrane helix</keyword>
<dbReference type="EC" id="3.4.16.6"/>
<dbReference type="EMBL" id="AM920431">
    <property type="protein sequence ID" value="CAP92868.1"/>
    <property type="molecule type" value="Genomic_DNA"/>
</dbReference>
<dbReference type="RefSeq" id="XP_002560571.1">
    <property type="nucleotide sequence ID" value="XM_002560525.1"/>
</dbReference>
<dbReference type="SMR" id="B6H7A4"/>
<dbReference type="STRING" id="500485.B6H7A4"/>
<dbReference type="ESTHER" id="penrw-kex1">
    <property type="family name" value="Carboxypeptidase_S10"/>
</dbReference>
<dbReference type="MEROPS" id="S10.007"/>
<dbReference type="GlyCosmos" id="B6H7A4">
    <property type="glycosylation" value="3 sites, No reported glycans"/>
</dbReference>
<dbReference type="GeneID" id="8313930"/>
<dbReference type="KEGG" id="pcs:N7525_011484"/>
<dbReference type="VEuPathDB" id="FungiDB:PCH_Pc16g01980"/>
<dbReference type="eggNOG" id="KOG1282">
    <property type="taxonomic scope" value="Eukaryota"/>
</dbReference>
<dbReference type="HOGENOM" id="CLU_008523_11_0_1"/>
<dbReference type="OMA" id="EMADQFV"/>
<dbReference type="OrthoDB" id="443318at2759"/>
<dbReference type="BioCyc" id="PCHR:PC16G01980-MONOMER"/>
<dbReference type="Proteomes" id="UP000000724">
    <property type="component" value="Contig Pc00c16"/>
</dbReference>
<dbReference type="GO" id="GO:0016020">
    <property type="term" value="C:membrane"/>
    <property type="evidence" value="ECO:0007669"/>
    <property type="project" value="UniProtKB-KW"/>
</dbReference>
<dbReference type="GO" id="GO:0005802">
    <property type="term" value="C:trans-Golgi network"/>
    <property type="evidence" value="ECO:0007669"/>
    <property type="project" value="TreeGrafter"/>
</dbReference>
<dbReference type="GO" id="GO:0004185">
    <property type="term" value="F:serine-type carboxypeptidase activity"/>
    <property type="evidence" value="ECO:0007669"/>
    <property type="project" value="UniProtKB-EC"/>
</dbReference>
<dbReference type="GO" id="GO:0017000">
    <property type="term" value="P:antibiotic biosynthetic process"/>
    <property type="evidence" value="ECO:0007669"/>
    <property type="project" value="UniProtKB-ARBA"/>
</dbReference>
<dbReference type="GO" id="GO:0006915">
    <property type="term" value="P:apoptotic process"/>
    <property type="evidence" value="ECO:0007669"/>
    <property type="project" value="UniProtKB-KW"/>
</dbReference>
<dbReference type="GO" id="GO:0072330">
    <property type="term" value="P:monocarboxylic acid biosynthetic process"/>
    <property type="evidence" value="ECO:0007669"/>
    <property type="project" value="UniProtKB-ARBA"/>
</dbReference>
<dbReference type="GO" id="GO:0006508">
    <property type="term" value="P:proteolysis"/>
    <property type="evidence" value="ECO:0007669"/>
    <property type="project" value="UniProtKB-KW"/>
</dbReference>
<dbReference type="FunFam" id="3.40.50.1820:FF:000121">
    <property type="entry name" value="Carboxypeptidase D"/>
    <property type="match status" value="1"/>
</dbReference>
<dbReference type="Gene3D" id="3.40.50.1820">
    <property type="entry name" value="alpha/beta hydrolase"/>
    <property type="match status" value="1"/>
</dbReference>
<dbReference type="InterPro" id="IPR029058">
    <property type="entry name" value="AB_hydrolase_fold"/>
</dbReference>
<dbReference type="InterPro" id="IPR001563">
    <property type="entry name" value="Peptidase_S10"/>
</dbReference>
<dbReference type="InterPro" id="IPR018202">
    <property type="entry name" value="Ser_caboxypep_ser_AS"/>
</dbReference>
<dbReference type="PANTHER" id="PTHR11802:SF190">
    <property type="entry name" value="PHEROMONE-PROCESSING CARBOXYPEPTIDASE KEX1"/>
    <property type="match status" value="1"/>
</dbReference>
<dbReference type="PANTHER" id="PTHR11802">
    <property type="entry name" value="SERINE PROTEASE FAMILY S10 SERINE CARBOXYPEPTIDASE"/>
    <property type="match status" value="1"/>
</dbReference>
<dbReference type="Pfam" id="PF00450">
    <property type="entry name" value="Peptidase_S10"/>
    <property type="match status" value="1"/>
</dbReference>
<dbReference type="PRINTS" id="PR00724">
    <property type="entry name" value="CRBOXYPTASEC"/>
</dbReference>
<dbReference type="SUPFAM" id="SSF53474">
    <property type="entry name" value="alpha/beta-Hydrolases"/>
    <property type="match status" value="1"/>
</dbReference>
<dbReference type="PROSITE" id="PS00131">
    <property type="entry name" value="CARBOXYPEPT_SER_SER"/>
    <property type="match status" value="1"/>
</dbReference>
<proteinExistence type="inferred from homology"/>
<name>KEX1_PENRW</name>
<gene>
    <name type="primary">kex1</name>
    <name type="ORF">Pc16g01980</name>
</gene>
<comment type="function">
    <text evidence="1">Protease with a carboxypeptidase B-like function involved in the C-terminal processing of the lysine and arginine residues from protein precursors. Promotes cell fusion and is involved in the programmed cell death (By similarity).</text>
</comment>
<comment type="catalytic activity">
    <reaction>
        <text>Preferential release of a C-terminal arginine or lysine residue.</text>
        <dbReference type="EC" id="3.4.16.6"/>
    </reaction>
</comment>
<comment type="subcellular location">
    <subcellularLocation>
        <location evidence="1">Golgi apparatus</location>
        <location evidence="1">trans-Golgi network membrane</location>
        <topology evidence="1">Single-pass type I membrane protein</topology>
    </subcellularLocation>
</comment>
<comment type="similarity">
    <text evidence="5">Belongs to the peptidase S10 family.</text>
</comment>
<reference key="1">
    <citation type="journal article" date="2008" name="Nat. Biotechnol.">
        <title>Genome sequencing and analysis of the filamentous fungus Penicillium chrysogenum.</title>
        <authorList>
            <person name="van den Berg M.A."/>
            <person name="Albang R."/>
            <person name="Albermann K."/>
            <person name="Badger J.H."/>
            <person name="Daran J.-M."/>
            <person name="Driessen A.J.M."/>
            <person name="Garcia-Estrada C."/>
            <person name="Fedorova N.D."/>
            <person name="Harris D.M."/>
            <person name="Heijne W.H.M."/>
            <person name="Joardar V.S."/>
            <person name="Kiel J.A.K.W."/>
            <person name="Kovalchuk A."/>
            <person name="Martin J.F."/>
            <person name="Nierman W.C."/>
            <person name="Nijland J.G."/>
            <person name="Pronk J.T."/>
            <person name="Roubos J.A."/>
            <person name="van der Klei I.J."/>
            <person name="van Peij N.N.M.E."/>
            <person name="Veenhuis M."/>
            <person name="von Doehren H."/>
            <person name="Wagner C."/>
            <person name="Wortman J.R."/>
            <person name="Bovenberg R.A.L."/>
        </authorList>
    </citation>
    <scope>NUCLEOTIDE SEQUENCE [LARGE SCALE GENOMIC DNA]</scope>
    <source>
        <strain>ATCC 28089 / DSM 1075 / NRRL 1951 / Wisconsin 54-1255</strain>
    </source>
</reference>
<organism>
    <name type="scientific">Penicillium rubens (strain ATCC 28089 / DSM 1075 / NRRL 1951 / Wisconsin 54-1255)</name>
    <name type="common">Penicillium chrysogenum</name>
    <dbReference type="NCBI Taxonomy" id="500485"/>
    <lineage>
        <taxon>Eukaryota</taxon>
        <taxon>Fungi</taxon>
        <taxon>Dikarya</taxon>
        <taxon>Ascomycota</taxon>
        <taxon>Pezizomycotina</taxon>
        <taxon>Eurotiomycetes</taxon>
        <taxon>Eurotiomycetidae</taxon>
        <taxon>Eurotiales</taxon>
        <taxon>Aspergillaceae</taxon>
        <taxon>Penicillium</taxon>
        <taxon>Penicillium chrysogenum species complex</taxon>
    </lineage>
</organism>
<accession>B6H7A4</accession>
<evidence type="ECO:0000250" key="1"/>
<evidence type="ECO:0000255" key="2"/>
<evidence type="ECO:0000255" key="3">
    <source>
        <dbReference type="PROSITE-ProRule" id="PRU10074"/>
    </source>
</evidence>
<evidence type="ECO:0000256" key="4">
    <source>
        <dbReference type="SAM" id="MobiDB-lite"/>
    </source>
</evidence>
<evidence type="ECO:0000305" key="5"/>
<feature type="signal peptide" evidence="2">
    <location>
        <begin position="1"/>
        <end position="19"/>
    </location>
</feature>
<feature type="chain" id="PRO_5000409185" description="Pheromone-processing carboxypeptidase kex1">
    <location>
        <begin position="20"/>
        <end position="607"/>
    </location>
</feature>
<feature type="topological domain" description="Lumenal" evidence="2">
    <location>
        <begin position="20"/>
        <end position="502"/>
    </location>
</feature>
<feature type="transmembrane region" description="Helical" evidence="2">
    <location>
        <begin position="503"/>
        <end position="523"/>
    </location>
</feature>
<feature type="topological domain" description="Cytoplasmic" evidence="2">
    <location>
        <begin position="524"/>
        <end position="607"/>
    </location>
</feature>
<feature type="region of interest" description="Disordered" evidence="4">
    <location>
        <begin position="458"/>
        <end position="487"/>
    </location>
</feature>
<feature type="region of interest" description="Disordered" evidence="4">
    <location>
        <begin position="532"/>
        <end position="607"/>
    </location>
</feature>
<feature type="compositionally biased region" description="Polar residues" evidence="4">
    <location>
        <begin position="535"/>
        <end position="550"/>
    </location>
</feature>
<feature type="active site" evidence="3">
    <location>
        <position position="168"/>
    </location>
</feature>
<feature type="active site" evidence="3">
    <location>
        <position position="369"/>
    </location>
</feature>
<feature type="active site" evidence="3">
    <location>
        <position position="431"/>
    </location>
</feature>
<feature type="glycosylation site" description="N-linked (GlcNAc...) asparagine" evidence="2">
    <location>
        <position position="420"/>
    </location>
</feature>
<feature type="glycosylation site" description="N-linked (GlcNAc...) asparagine" evidence="2">
    <location>
        <position position="428"/>
    </location>
</feature>
<feature type="glycosylation site" description="N-linked (GlcNAc...) asparagine" evidence="2">
    <location>
        <position position="480"/>
    </location>
</feature>
<sequence length="607" mass="67721">MLLSALSLLLSPLVSASSAADYYVRSLPGAPEGPFLKMHAGHIEVDPDTNGNLFFWHFQNRHIANRQRTVIWLNGGPGCSSMDGAFMEVGPYRLQDDHTLKYNEGRWDEFANLLFVDNPVGTGFSYANTNSYLHELDEMAAHFVIFLEKFFELFPEYANDDLYIAGESYAGQHIPYIAKAIQDRNKGITENGGTKWPLKGLLIGNGWISPADQYPSYFKFIEREGLAKPGTSLHHNINALNEVCLSKLETPGAKNKLDVGACELVLQQFLDLTTEDHQCYNMYDVRLKDEAKSCGMNWPPDLKNIEPYLQRPDVVKALNINPAKKSGWTECAGMVHMAFTAKNSIPSVHLLPGLIESGINVLLFSGDKDLICNHIGTETLIHNMDWKGGTGFETSPGVWAPRHDWSFEGEPAGIYQSARNLTYVLFYNSSHMVPFDNPRQSRDMLDRFMKVDIASIGGQPSDSRIDGEKLPQTAVGGQANSTAAEQNEKERLKQTEMHAYTKSGEAVLIIVIIGVIAWGFFIWRSRRTRRGYKGVSNNDMSDSTSVLSRFQNKHSGRDVEAGDFDEAELDQLHSPSIEREDYAVGEASDDDDHIISHPETGGNRQSS</sequence>
<protein>
    <recommendedName>
        <fullName>Pheromone-processing carboxypeptidase kex1</fullName>
        <ecNumber>3.4.16.6</ecNumber>
    </recommendedName>
    <alternativeName>
        <fullName>Carboxypeptidase D</fullName>
    </alternativeName>
</protein>